<comment type="function">
    <text evidence="1">Endoplasmic reticulum-localized palmitoyltransferase that could catalyze the addition of palmitate onto protein substrates.</text>
</comment>
<comment type="catalytic activity">
    <reaction evidence="1">
        <text>L-cysteinyl-[protein] + hexadecanoyl-CoA = S-hexadecanoyl-L-cysteinyl-[protein] + CoA</text>
        <dbReference type="Rhea" id="RHEA:36683"/>
        <dbReference type="Rhea" id="RHEA-COMP:10131"/>
        <dbReference type="Rhea" id="RHEA-COMP:11032"/>
        <dbReference type="ChEBI" id="CHEBI:29950"/>
        <dbReference type="ChEBI" id="CHEBI:57287"/>
        <dbReference type="ChEBI" id="CHEBI:57379"/>
        <dbReference type="ChEBI" id="CHEBI:74151"/>
        <dbReference type="EC" id="2.3.1.225"/>
    </reaction>
    <physiologicalReaction direction="left-to-right" evidence="1">
        <dbReference type="Rhea" id="RHEA:36684"/>
    </physiologicalReaction>
</comment>
<comment type="subcellular location">
    <subcellularLocation>
        <location evidence="3">Endoplasmic reticulum membrane</location>
        <topology evidence="4">Multi-pass membrane protein</topology>
    </subcellularLocation>
</comment>
<comment type="developmental stage">
    <text evidence="6 7">Probably maternally supplied, the zygotic expression is detected early during development at the 512-cell stage and is stable until 24h hpf at least.</text>
</comment>
<comment type="domain">
    <text evidence="2">The DHHC domain is required for palmitoyltransferase activity.</text>
</comment>
<comment type="similarity">
    <text evidence="10">Belongs to the DHHC palmitoyltransferase family.</text>
</comment>
<keyword id="KW-0012">Acyltransferase</keyword>
<keyword id="KW-0256">Endoplasmic reticulum</keyword>
<keyword id="KW-0449">Lipoprotein</keyword>
<keyword id="KW-0472">Membrane</keyword>
<keyword id="KW-0564">Palmitate</keyword>
<keyword id="KW-1185">Reference proteome</keyword>
<keyword id="KW-0808">Transferase</keyword>
<keyword id="KW-0812">Transmembrane</keyword>
<keyword id="KW-1133">Transmembrane helix</keyword>
<accession>E7EZI4</accession>
<reference key="1">
    <citation type="journal article" date="2013" name="Nature">
        <title>The zebrafish reference genome sequence and its relationship to the human genome.</title>
        <authorList>
            <person name="Howe K."/>
            <person name="Clark M.D."/>
            <person name="Torroja C.F."/>
            <person name="Torrance J."/>
            <person name="Berthelot C."/>
            <person name="Muffato M."/>
            <person name="Collins J.E."/>
            <person name="Humphray S."/>
            <person name="McLaren K."/>
            <person name="Matthews L."/>
            <person name="McLaren S."/>
            <person name="Sealy I."/>
            <person name="Caccamo M."/>
            <person name="Churcher C."/>
            <person name="Scott C."/>
            <person name="Barrett J.C."/>
            <person name="Koch R."/>
            <person name="Rauch G.J."/>
            <person name="White S."/>
            <person name="Chow W."/>
            <person name="Kilian B."/>
            <person name="Quintais L.T."/>
            <person name="Guerra-Assuncao J.A."/>
            <person name="Zhou Y."/>
            <person name="Gu Y."/>
            <person name="Yen J."/>
            <person name="Vogel J.H."/>
            <person name="Eyre T."/>
            <person name="Redmond S."/>
            <person name="Banerjee R."/>
            <person name="Chi J."/>
            <person name="Fu B."/>
            <person name="Langley E."/>
            <person name="Maguire S.F."/>
            <person name="Laird G.K."/>
            <person name="Lloyd D."/>
            <person name="Kenyon E."/>
            <person name="Donaldson S."/>
            <person name="Sehra H."/>
            <person name="Almeida-King J."/>
            <person name="Loveland J."/>
            <person name="Trevanion S."/>
            <person name="Jones M."/>
            <person name="Quail M."/>
            <person name="Willey D."/>
            <person name="Hunt A."/>
            <person name="Burton J."/>
            <person name="Sims S."/>
            <person name="McLay K."/>
            <person name="Plumb B."/>
            <person name="Davis J."/>
            <person name="Clee C."/>
            <person name="Oliver K."/>
            <person name="Clark R."/>
            <person name="Riddle C."/>
            <person name="Elliot D."/>
            <person name="Threadgold G."/>
            <person name="Harden G."/>
            <person name="Ware D."/>
            <person name="Begum S."/>
            <person name="Mortimore B."/>
            <person name="Kerry G."/>
            <person name="Heath P."/>
            <person name="Phillimore B."/>
            <person name="Tracey A."/>
            <person name="Corby N."/>
            <person name="Dunn M."/>
            <person name="Johnson C."/>
            <person name="Wood J."/>
            <person name="Clark S."/>
            <person name="Pelan S."/>
            <person name="Griffiths G."/>
            <person name="Smith M."/>
            <person name="Glithero R."/>
            <person name="Howden P."/>
            <person name="Barker N."/>
            <person name="Lloyd C."/>
            <person name="Stevens C."/>
            <person name="Harley J."/>
            <person name="Holt K."/>
            <person name="Panagiotidis G."/>
            <person name="Lovell J."/>
            <person name="Beasley H."/>
            <person name="Henderson C."/>
            <person name="Gordon D."/>
            <person name="Auger K."/>
            <person name="Wright D."/>
            <person name="Collins J."/>
            <person name="Raisen C."/>
            <person name="Dyer L."/>
            <person name="Leung K."/>
            <person name="Robertson L."/>
            <person name="Ambridge K."/>
            <person name="Leongamornlert D."/>
            <person name="McGuire S."/>
            <person name="Gilderthorp R."/>
            <person name="Griffiths C."/>
            <person name="Manthravadi D."/>
            <person name="Nichol S."/>
            <person name="Barker G."/>
            <person name="Whitehead S."/>
            <person name="Kay M."/>
            <person name="Brown J."/>
            <person name="Murnane C."/>
            <person name="Gray E."/>
            <person name="Humphries M."/>
            <person name="Sycamore N."/>
            <person name="Barker D."/>
            <person name="Saunders D."/>
            <person name="Wallis J."/>
            <person name="Babbage A."/>
            <person name="Hammond S."/>
            <person name="Mashreghi-Mohammadi M."/>
            <person name="Barr L."/>
            <person name="Martin S."/>
            <person name="Wray P."/>
            <person name="Ellington A."/>
            <person name="Matthews N."/>
            <person name="Ellwood M."/>
            <person name="Woodmansey R."/>
            <person name="Clark G."/>
            <person name="Cooper J."/>
            <person name="Tromans A."/>
            <person name="Grafham D."/>
            <person name="Skuce C."/>
            <person name="Pandian R."/>
            <person name="Andrews R."/>
            <person name="Harrison E."/>
            <person name="Kimberley A."/>
            <person name="Garnett J."/>
            <person name="Fosker N."/>
            <person name="Hall R."/>
            <person name="Garner P."/>
            <person name="Kelly D."/>
            <person name="Bird C."/>
            <person name="Palmer S."/>
            <person name="Gehring I."/>
            <person name="Berger A."/>
            <person name="Dooley C.M."/>
            <person name="Ersan-Urun Z."/>
            <person name="Eser C."/>
            <person name="Geiger H."/>
            <person name="Geisler M."/>
            <person name="Karotki L."/>
            <person name="Kirn A."/>
            <person name="Konantz J."/>
            <person name="Konantz M."/>
            <person name="Oberlander M."/>
            <person name="Rudolph-Geiger S."/>
            <person name="Teucke M."/>
            <person name="Lanz C."/>
            <person name="Raddatz G."/>
            <person name="Osoegawa K."/>
            <person name="Zhu B."/>
            <person name="Rapp A."/>
            <person name="Widaa S."/>
            <person name="Langford C."/>
            <person name="Yang F."/>
            <person name="Schuster S.C."/>
            <person name="Carter N.P."/>
            <person name="Harrow J."/>
            <person name="Ning Z."/>
            <person name="Herrero J."/>
            <person name="Searle S.M."/>
            <person name="Enright A."/>
            <person name="Geisler R."/>
            <person name="Plasterk R.H."/>
            <person name="Lee C."/>
            <person name="Westerfield M."/>
            <person name="de Jong P.J."/>
            <person name="Zon L.I."/>
            <person name="Postlethwait J.H."/>
            <person name="Nusslein-Volhard C."/>
            <person name="Hubbard T.J."/>
            <person name="Roest Crollius H."/>
            <person name="Rogers J."/>
            <person name="Stemple D.L."/>
        </authorList>
    </citation>
    <scope>NUCLEOTIDE SEQUENCE [LARGE SCALE GENOMIC DNA]</scope>
    <source>
        <strain>Tuebingen</strain>
    </source>
</reference>
<reference key="2">
    <citation type="journal article" date="2015" name="Neurotoxicol. Teratol.">
        <title>2-Bromopalmitate impairs neural stem/progenitor cell proliferation, promotes cell apoptosis and induces malformation in zebrafish embryonic brain.</title>
        <authorList>
            <person name="Wang C."/>
            <person name="Chen X."/>
            <person name="Shi W."/>
            <person name="Wang F."/>
            <person name="Du Z."/>
            <person name="Li X."/>
            <person name="Yao Y."/>
            <person name="Liu T."/>
            <person name="Shao T."/>
            <person name="Li G."/>
            <person name="Hao A."/>
        </authorList>
    </citation>
    <scope>DEVELOPMENTAL STAGE</scope>
</reference>
<reference key="3">
    <citation type="journal article" date="2016" name="Biochem. Biophys. Res. Commun.">
        <title>Protein palmitoylation activate zygotic gene expression during the maternal-to-zygotic transition.</title>
        <authorList>
            <person name="Du Z."/>
            <person name="Chen X."/>
            <person name="Li X."/>
            <person name="He K."/>
            <person name="Ji S."/>
            <person name="Shi W."/>
            <person name="Hao A."/>
        </authorList>
    </citation>
    <scope>DEVELOPMENTAL STAGE</scope>
</reference>
<name>ZDH11_DANRE</name>
<proteinExistence type="evidence at transcript level"/>
<organism>
    <name type="scientific">Danio rerio</name>
    <name type="common">Zebrafish</name>
    <name type="synonym">Brachydanio rerio</name>
    <dbReference type="NCBI Taxonomy" id="7955"/>
    <lineage>
        <taxon>Eukaryota</taxon>
        <taxon>Metazoa</taxon>
        <taxon>Chordata</taxon>
        <taxon>Craniata</taxon>
        <taxon>Vertebrata</taxon>
        <taxon>Euteleostomi</taxon>
        <taxon>Actinopterygii</taxon>
        <taxon>Neopterygii</taxon>
        <taxon>Teleostei</taxon>
        <taxon>Ostariophysi</taxon>
        <taxon>Cypriniformes</taxon>
        <taxon>Danionidae</taxon>
        <taxon>Danioninae</taxon>
        <taxon>Danio</taxon>
    </lineage>
</organism>
<dbReference type="EC" id="2.3.1.225" evidence="1"/>
<dbReference type="EMBL" id="CU694320">
    <property type="status" value="NOT_ANNOTATED_CDS"/>
    <property type="molecule type" value="Genomic_DNA"/>
</dbReference>
<dbReference type="EMBL" id="LO017770">
    <property type="status" value="NOT_ANNOTATED_CDS"/>
    <property type="molecule type" value="Genomic_DNA"/>
</dbReference>
<dbReference type="RefSeq" id="XP_009291003.1">
    <property type="nucleotide sequence ID" value="XM_009292728.4"/>
</dbReference>
<dbReference type="FunCoup" id="E7EZI4">
    <property type="interactions" value="150"/>
</dbReference>
<dbReference type="STRING" id="7955.ENSDARP00000104437"/>
<dbReference type="PaxDb" id="7955-ENSDARP00000104437"/>
<dbReference type="GeneID" id="100334198"/>
<dbReference type="KEGG" id="dre:100334198"/>
<dbReference type="CTD" id="79844"/>
<dbReference type="eggNOG" id="KOG1311">
    <property type="taxonomic scope" value="Eukaryota"/>
</dbReference>
<dbReference type="HOGENOM" id="CLU_020283_1_0_1"/>
<dbReference type="InParanoid" id="E7EZI4"/>
<dbReference type="OrthoDB" id="9909019at2759"/>
<dbReference type="TreeFam" id="TF317498"/>
<dbReference type="PRO" id="PR:E7EZI4"/>
<dbReference type="Proteomes" id="UP000000437">
    <property type="component" value="Chromosome 16"/>
</dbReference>
<dbReference type="GO" id="GO:0005789">
    <property type="term" value="C:endoplasmic reticulum membrane"/>
    <property type="evidence" value="ECO:0007669"/>
    <property type="project" value="UniProtKB-SubCell"/>
</dbReference>
<dbReference type="GO" id="GO:0010008">
    <property type="term" value="C:endosome membrane"/>
    <property type="evidence" value="ECO:0000250"/>
    <property type="project" value="UniProtKB"/>
</dbReference>
<dbReference type="GO" id="GO:0019706">
    <property type="term" value="F:protein-cysteine S-palmitoyltransferase activity"/>
    <property type="evidence" value="ECO:0000250"/>
    <property type="project" value="UniProtKB"/>
</dbReference>
<dbReference type="GO" id="GO:0018230">
    <property type="term" value="P:peptidyl-L-cysteine S-palmitoylation"/>
    <property type="evidence" value="ECO:0000250"/>
    <property type="project" value="UniProtKB"/>
</dbReference>
<dbReference type="InterPro" id="IPR001594">
    <property type="entry name" value="Palmitoyltrfase_DHHC"/>
</dbReference>
<dbReference type="InterPro" id="IPR039859">
    <property type="entry name" value="PFA4/ZDH16/20/ERF2-like"/>
</dbReference>
<dbReference type="PANTHER" id="PTHR22883:SF22">
    <property type="entry name" value="PALMITOYLTRANSFERASE ZDHHC11-RELATED"/>
    <property type="match status" value="1"/>
</dbReference>
<dbReference type="PANTHER" id="PTHR22883">
    <property type="entry name" value="ZINC FINGER DHHC DOMAIN CONTAINING PROTEIN"/>
    <property type="match status" value="1"/>
</dbReference>
<dbReference type="Pfam" id="PF01529">
    <property type="entry name" value="DHHC"/>
    <property type="match status" value="1"/>
</dbReference>
<dbReference type="PROSITE" id="PS50216">
    <property type="entry name" value="DHHC"/>
    <property type="match status" value="1"/>
</dbReference>
<protein>
    <recommendedName>
        <fullName evidence="10">Palmitoyltransferase ZDHHC11</fullName>
        <ecNumber evidence="1">2.3.1.225</ecNumber>
    </recommendedName>
    <alternativeName>
        <fullName evidence="8">DHHC domain-containing protein 11</fullName>
    </alternativeName>
    <alternativeName>
        <fullName evidence="11">Zinc finger DHHC domain-containing protein 11</fullName>
    </alternativeName>
</protein>
<feature type="chain" id="PRO_0000450386" description="Palmitoyltransferase ZDHHC11">
    <location>
        <begin position="1"/>
        <end position="430"/>
    </location>
</feature>
<feature type="topological domain" description="Cytoplasmic" evidence="10">
    <location>
        <begin position="1"/>
        <end position="46"/>
    </location>
</feature>
<feature type="transmembrane region" description="Helical" evidence="4">
    <location>
        <begin position="47"/>
        <end position="67"/>
    </location>
</feature>
<feature type="topological domain" description="Lumenal" evidence="10">
    <location>
        <begin position="68"/>
        <end position="76"/>
    </location>
</feature>
<feature type="transmembrane region" description="Helical" evidence="4">
    <location>
        <begin position="77"/>
        <end position="97"/>
    </location>
</feature>
<feature type="topological domain" description="Cytoplasmic" evidence="10">
    <location>
        <begin position="98"/>
        <end position="176"/>
    </location>
</feature>
<feature type="transmembrane region" description="Helical" evidence="4">
    <location>
        <begin position="177"/>
        <end position="197"/>
    </location>
</feature>
<feature type="topological domain" description="Lumenal" evidence="10">
    <location>
        <begin position="198"/>
        <end position="234"/>
    </location>
</feature>
<feature type="transmembrane region" description="Helical" evidence="4">
    <location>
        <begin position="235"/>
        <end position="255"/>
    </location>
</feature>
<feature type="topological domain" description="Cytoplasmic" evidence="10">
    <location>
        <begin position="256"/>
        <end position="430"/>
    </location>
</feature>
<feature type="domain" description="DHHC" evidence="5">
    <location>
        <begin position="129"/>
        <end position="179"/>
    </location>
</feature>
<feature type="active site" description="S-palmitoyl cysteine intermediate" evidence="1 5">
    <location>
        <position position="159"/>
    </location>
</feature>
<gene>
    <name evidence="9" type="primary">zdhhc11</name>
    <name evidence="8" type="synonym">dhhc11</name>
</gene>
<sequence length="430" mass="47723">MTNLNCFGRHRRRTAPHNATGSRSELVAPPIHSRINGWSSPLHSFQFIALLIFSFMAIVAFGIYVPLLPAPWSYAAYALIGSAFVLHLFSHVTAVTIDPADVNVRRRKDYSSPMPTFDNSKHPHVIDNLHCTLCEVDVSPKAKHCSTCNKCIADFDHHCKWLNNCVGGRNYWFFFTAVSSAVIGVILLIPLVLFVFIEHYVNPAVLRTAPQFQTVKGNGTWLVFLPVAPVETSSISLLVVSFITALLSLAALLLLCHLLCFHIYLLSQGISTYEYIVRKRQSPNPKEKQQVPPALPSNGATAQSLELQEPPLNCDAPLSSRSCTFKLEDRGPMPEPICAEMEEASGEHHLSYSSESATQKIAGESVMSLPVVWSLSETERPQASQVEVKPLEGRPVVQDPLGSSIMDTALVHQQLMTEQPQYLHFKQKMP</sequence>
<evidence type="ECO:0000250" key="1">
    <source>
        <dbReference type="UniProtKB" id="Q14AK4"/>
    </source>
</evidence>
<evidence type="ECO:0000250" key="2">
    <source>
        <dbReference type="UniProtKB" id="Q8IUH5"/>
    </source>
</evidence>
<evidence type="ECO:0000250" key="3">
    <source>
        <dbReference type="UniProtKB" id="Q9H8X9"/>
    </source>
</evidence>
<evidence type="ECO:0000255" key="4"/>
<evidence type="ECO:0000255" key="5">
    <source>
        <dbReference type="PROSITE-ProRule" id="PRU00067"/>
    </source>
</evidence>
<evidence type="ECO:0000269" key="6">
    <source>
    </source>
</evidence>
<evidence type="ECO:0000269" key="7">
    <source>
    </source>
</evidence>
<evidence type="ECO:0000303" key="8">
    <source>
    </source>
</evidence>
<evidence type="ECO:0000303" key="9">
    <source>
    </source>
</evidence>
<evidence type="ECO:0000305" key="10"/>
<evidence type="ECO:0000305" key="11">
    <source>
    </source>
</evidence>